<accession>Q58T95</accession>
<evidence type="ECO:0000250" key="1"/>
<evidence type="ECO:0000255" key="2"/>
<evidence type="ECO:0000269" key="3">
    <source>
    </source>
</evidence>
<evidence type="ECO:0000305" key="4"/>
<proteinExistence type="evidence at protein level"/>
<sequence length="142" mass="15586">MNFKYIVAVSFLITSGYAESVKNDEQSLSQRDVLEEESLREIRGIGGALLSVGKSALKGLAKGFAEHFGKRSAEDHEVMKRLEAVIRDLDSLDHPEEASERETRGFNQEEIANLFTKKEKRILGPVLGLVGSALGGLIKKIG</sequence>
<reference key="1">
    <citation type="journal article" date="2005" name="Eur. J. Immunol.">
        <title>Variety of antimicrobial peptides in the Bombina maxima toad and evidence of their rapid diversification.</title>
        <authorList>
            <person name="Lee W.-H."/>
            <person name="Li Y."/>
            <person name="Lai R."/>
            <person name="Li S."/>
            <person name="Zhang Y."/>
            <person name="Wang W."/>
        </authorList>
    </citation>
    <scope>NUCLEOTIDE SEQUENCE [GENOMIC DNA]</scope>
    <scope>AMIDATION AT ILE-141</scope>
    <source>
        <tissue>Skin</tissue>
    </source>
</reference>
<organism>
    <name type="scientific">Bombina maxima</name>
    <name type="common">Giant fire-bellied toad</name>
    <name type="synonym">Chinese red belly toad</name>
    <dbReference type="NCBI Taxonomy" id="161274"/>
    <lineage>
        <taxon>Eukaryota</taxon>
        <taxon>Metazoa</taxon>
        <taxon>Chordata</taxon>
        <taxon>Craniata</taxon>
        <taxon>Vertebrata</taxon>
        <taxon>Euteleostomi</taxon>
        <taxon>Amphibia</taxon>
        <taxon>Batrachia</taxon>
        <taxon>Anura</taxon>
        <taxon>Bombinatoridae</taxon>
        <taxon>Bombina</taxon>
    </lineage>
</organism>
<comment type="function">
    <text evidence="1">Maximin-y shows antimicrobial activity against bacteria and against the fungus C.albicans. It has little hemolytic activity (By similarity).</text>
</comment>
<comment type="function">
    <text evidence="1">Maximin-H11 shows antimicrobial activity against bacteria and against the fungus C.albicans. Shows strong hemolytic activity (By similarity).</text>
</comment>
<comment type="subcellular location">
    <subcellularLocation>
        <location>Secreted</location>
    </subcellularLocation>
</comment>
<comment type="tissue specificity">
    <text>Expressed by the skin glands.</text>
</comment>
<comment type="similarity">
    <text evidence="4">Belongs to the bombinin family.</text>
</comment>
<protein>
    <recommendedName>
        <fullName>Maximins y/H11</fullName>
    </recommendedName>
    <component>
        <recommendedName>
            <fullName>Maximin-y</fullName>
        </recommendedName>
    </component>
    <component>
        <recommendedName>
            <fullName>Maximin-H11</fullName>
        </recommendedName>
    </component>
</protein>
<feature type="signal peptide" evidence="2">
    <location>
        <begin position="1"/>
        <end position="18"/>
    </location>
</feature>
<feature type="propeptide" id="PRO_0000003236" evidence="1">
    <location>
        <begin position="19"/>
        <end position="43"/>
    </location>
</feature>
<feature type="peptide" id="PRO_0000003237" description="Maximin-y">
    <location>
        <begin position="44"/>
        <end position="68"/>
    </location>
</feature>
<feature type="propeptide" id="PRO_0000003238" evidence="4">
    <location>
        <begin position="72"/>
        <end position="121"/>
    </location>
</feature>
<feature type="peptide" id="PRO_0000003239" description="Maximin-H11">
    <location>
        <begin position="122"/>
        <end position="141"/>
    </location>
</feature>
<feature type="modified residue" description="Phenylalanine amide" evidence="4">
    <location>
        <position position="68"/>
    </location>
</feature>
<feature type="modified residue" description="Isoleucine amide" evidence="3">
    <location>
        <position position="141"/>
    </location>
</feature>
<name>MYH11_BOMMX</name>
<keyword id="KW-0027">Amidation</keyword>
<keyword id="KW-0878">Amphibian defense peptide</keyword>
<keyword id="KW-0044">Antibiotic</keyword>
<keyword id="KW-0929">Antimicrobial</keyword>
<keyword id="KW-0165">Cleavage on pair of basic residues</keyword>
<keyword id="KW-0204">Cytolysis</keyword>
<keyword id="KW-0295">Fungicide</keyword>
<keyword id="KW-0354">Hemolysis</keyword>
<keyword id="KW-0964">Secreted</keyword>
<keyword id="KW-0732">Signal</keyword>
<dbReference type="EMBL" id="AY847749">
    <property type="protein sequence ID" value="AAX50243.1"/>
    <property type="molecule type" value="Genomic_DNA"/>
</dbReference>
<dbReference type="SMR" id="Q58T95"/>
<dbReference type="GO" id="GO:0005576">
    <property type="term" value="C:extracellular region"/>
    <property type="evidence" value="ECO:0007669"/>
    <property type="project" value="UniProtKB-SubCell"/>
</dbReference>
<dbReference type="GO" id="GO:0042742">
    <property type="term" value="P:defense response to bacterium"/>
    <property type="evidence" value="ECO:0007669"/>
    <property type="project" value="UniProtKB-KW"/>
</dbReference>
<dbReference type="GO" id="GO:0050832">
    <property type="term" value="P:defense response to fungus"/>
    <property type="evidence" value="ECO:0007669"/>
    <property type="project" value="UniProtKB-KW"/>
</dbReference>
<dbReference type="GO" id="GO:0031640">
    <property type="term" value="P:killing of cells of another organism"/>
    <property type="evidence" value="ECO:0007669"/>
    <property type="project" value="UniProtKB-KW"/>
</dbReference>
<dbReference type="InterPro" id="IPR007962">
    <property type="entry name" value="Bombinin"/>
</dbReference>
<dbReference type="Pfam" id="PF05298">
    <property type="entry name" value="Bombinin"/>
    <property type="match status" value="1"/>
</dbReference>